<feature type="chain" id="PRO_1000149687" description="Replication restart protein DnaT">
    <location>
        <begin position="1"/>
        <end position="164"/>
    </location>
</feature>
<reference key="1">
    <citation type="journal article" date="2009" name="Science">
        <title>The dynamics and time scale of ongoing genomic erosion in symbiotic bacteria.</title>
        <authorList>
            <person name="Moran N.A."/>
            <person name="McLaughlin H.J."/>
            <person name="Sorek R."/>
        </authorList>
    </citation>
    <scope>NUCLEOTIDE SEQUENCE [LARGE SCALE GENOMIC DNA]</scope>
    <source>
        <strain>Tuc7</strain>
    </source>
</reference>
<proteinExistence type="inferred from homology"/>
<dbReference type="EMBL" id="CP001158">
    <property type="protein sequence ID" value="ACL29854.1"/>
    <property type="molecule type" value="Genomic_DNA"/>
</dbReference>
<dbReference type="RefSeq" id="WP_009873983.1">
    <property type="nucleotide sequence ID" value="NC_011834.1"/>
</dbReference>
<dbReference type="SMR" id="B8D6T9"/>
<dbReference type="KEGG" id="bau:BUAPTUC7_022"/>
<dbReference type="HOGENOM" id="CLU_1501592_0_0_6"/>
<dbReference type="GO" id="GO:1990077">
    <property type="term" value="C:primosome complex"/>
    <property type="evidence" value="ECO:0007669"/>
    <property type="project" value="UniProtKB-KW"/>
</dbReference>
<dbReference type="GO" id="GO:0006269">
    <property type="term" value="P:DNA replication, synthesis of primer"/>
    <property type="evidence" value="ECO:0007669"/>
    <property type="project" value="UniProtKB-UniRule"/>
</dbReference>
<dbReference type="Gene3D" id="1.10.8.1180">
    <property type="match status" value="1"/>
</dbReference>
<dbReference type="HAMAP" id="MF_01061">
    <property type="entry name" value="DnaT"/>
    <property type="match status" value="1"/>
</dbReference>
<dbReference type="InterPro" id="IPR020917">
    <property type="entry name" value="DnaT"/>
</dbReference>
<dbReference type="InterPro" id="IPR040480">
    <property type="entry name" value="DnaT_DNA_bind"/>
</dbReference>
<dbReference type="NCBIfam" id="NF002770">
    <property type="entry name" value="PRK02854.1"/>
    <property type="match status" value="1"/>
</dbReference>
<dbReference type="Pfam" id="PF17948">
    <property type="entry name" value="DnaT"/>
    <property type="match status" value="1"/>
</dbReference>
<evidence type="ECO:0000255" key="1">
    <source>
        <dbReference type="HAMAP-Rule" id="MF_01061"/>
    </source>
</evidence>
<keyword id="KW-0235">DNA replication</keyword>
<keyword id="KW-0238">DNA-binding</keyword>
<keyword id="KW-0639">Primosome</keyword>
<accession>B8D6T9</accession>
<protein>
    <recommendedName>
        <fullName evidence="1">Replication restart protein DnaT</fullName>
    </recommendedName>
</protein>
<name>DNAT_BUCAT</name>
<comment type="function">
    <text evidence="1">Involved in the restart of stalled replication forks, which reloads the replicative helicase on sites other than the origin of replication. Can function in multiple replication restart pathways. Displaces ssDNA from a PriB-ssDNA complex. Probably forms a spiral filament on ssDNA.</text>
</comment>
<comment type="subunit">
    <text evidence="1">Homooligomerizes. Interacts with PriB. Component of the replication restart primosome. Primosome assembly occurs via a 'hand-off' mechanism. PriA binds to replication forks, subsequently PriB then DnaT bind; DnaT then displaces ssDNA to generate the helicase loading substrate.</text>
</comment>
<comment type="similarity">
    <text evidence="1">Belongs to the DnaT family.</text>
</comment>
<gene>
    <name evidence="1" type="primary">dnaT</name>
    <name type="ordered locus">BUAPTUC7_022</name>
</gene>
<sequence length="164" mass="19155">MKILISDNISLELFCKNPIKILEKSNKGIIGVLKNKSPIFYVITPYILKKIFDLECNLLDLDKTKQQISKKFSMHPQWTPDKDFIRQAALWGITLTEEILESELASFISYWQAEGCFFHHIQWQQKLARSLQKSRSISYMSQKKRDITYIPTPDQTVPNGFRGK</sequence>
<organism>
    <name type="scientific">Buchnera aphidicola subsp. Acyrthosiphon pisum (strain Tuc7)</name>
    <dbReference type="NCBI Taxonomy" id="561501"/>
    <lineage>
        <taxon>Bacteria</taxon>
        <taxon>Pseudomonadati</taxon>
        <taxon>Pseudomonadota</taxon>
        <taxon>Gammaproteobacteria</taxon>
        <taxon>Enterobacterales</taxon>
        <taxon>Erwiniaceae</taxon>
        <taxon>Buchnera</taxon>
    </lineage>
</organism>